<dbReference type="EMBL" id="BA000036">
    <property type="protein sequence ID" value="BAB98105.1"/>
    <property type="molecule type" value="Genomic_DNA"/>
</dbReference>
<dbReference type="EMBL" id="BX927150">
    <property type="protein sequence ID" value="CAF19417.1"/>
    <property type="status" value="ALT_INIT"/>
    <property type="molecule type" value="Genomic_DNA"/>
</dbReference>
<dbReference type="RefSeq" id="NP_599944.1">
    <property type="nucleotide sequence ID" value="NC_003450.3"/>
</dbReference>
<dbReference type="STRING" id="196627.cg0817"/>
<dbReference type="KEGG" id="cgb:cg0817"/>
<dbReference type="KEGG" id="cgl:Cgl0712"/>
<dbReference type="PATRIC" id="fig|196627.13.peg.699"/>
<dbReference type="eggNOG" id="COG3158">
    <property type="taxonomic scope" value="Bacteria"/>
</dbReference>
<dbReference type="HOGENOM" id="CLU_008142_4_2_11"/>
<dbReference type="OrthoDB" id="9805577at2"/>
<dbReference type="BioCyc" id="CORYNE:G18NG-10274-MONOMER"/>
<dbReference type="Proteomes" id="UP000000582">
    <property type="component" value="Chromosome"/>
</dbReference>
<dbReference type="Proteomes" id="UP000001009">
    <property type="component" value="Chromosome"/>
</dbReference>
<dbReference type="GO" id="GO:0005886">
    <property type="term" value="C:plasma membrane"/>
    <property type="evidence" value="ECO:0007669"/>
    <property type="project" value="UniProtKB-SubCell"/>
</dbReference>
<dbReference type="GO" id="GO:0015079">
    <property type="term" value="F:potassium ion transmembrane transporter activity"/>
    <property type="evidence" value="ECO:0007669"/>
    <property type="project" value="UniProtKB-UniRule"/>
</dbReference>
<dbReference type="GO" id="GO:0015293">
    <property type="term" value="F:symporter activity"/>
    <property type="evidence" value="ECO:0007669"/>
    <property type="project" value="UniProtKB-UniRule"/>
</dbReference>
<dbReference type="HAMAP" id="MF_01522">
    <property type="entry name" value="Kup"/>
    <property type="match status" value="1"/>
</dbReference>
<dbReference type="InterPro" id="IPR003855">
    <property type="entry name" value="K+_transporter"/>
</dbReference>
<dbReference type="InterPro" id="IPR053952">
    <property type="entry name" value="K_trans_C"/>
</dbReference>
<dbReference type="InterPro" id="IPR053951">
    <property type="entry name" value="K_trans_N"/>
</dbReference>
<dbReference type="InterPro" id="IPR023051">
    <property type="entry name" value="Kup"/>
</dbReference>
<dbReference type="PANTHER" id="PTHR30540:SF79">
    <property type="entry name" value="LOW AFFINITY POTASSIUM TRANSPORT SYSTEM PROTEIN KUP"/>
    <property type="match status" value="1"/>
</dbReference>
<dbReference type="PANTHER" id="PTHR30540">
    <property type="entry name" value="OSMOTIC STRESS POTASSIUM TRANSPORTER"/>
    <property type="match status" value="1"/>
</dbReference>
<dbReference type="Pfam" id="PF02705">
    <property type="entry name" value="K_trans"/>
    <property type="match status" value="1"/>
</dbReference>
<dbReference type="Pfam" id="PF22776">
    <property type="entry name" value="K_trans_C"/>
    <property type="match status" value="1"/>
</dbReference>
<reference key="1">
    <citation type="journal article" date="2003" name="Appl. Microbiol. Biotechnol.">
        <title>The Corynebacterium glutamicum genome: features and impacts on biotechnological processes.</title>
        <authorList>
            <person name="Ikeda M."/>
            <person name="Nakagawa S."/>
        </authorList>
    </citation>
    <scope>NUCLEOTIDE SEQUENCE [LARGE SCALE GENOMIC DNA]</scope>
    <source>
        <strain>ATCC 13032 / DSM 20300 / JCM 1318 / BCRC 11384 / CCUG 27702 / LMG 3730 / NBRC 12168 / NCIMB 10025 / NRRL B-2784 / 534</strain>
    </source>
</reference>
<reference key="2">
    <citation type="journal article" date="2003" name="J. Biotechnol.">
        <title>The complete Corynebacterium glutamicum ATCC 13032 genome sequence and its impact on the production of L-aspartate-derived amino acids and vitamins.</title>
        <authorList>
            <person name="Kalinowski J."/>
            <person name="Bathe B."/>
            <person name="Bartels D."/>
            <person name="Bischoff N."/>
            <person name="Bott M."/>
            <person name="Burkovski A."/>
            <person name="Dusch N."/>
            <person name="Eggeling L."/>
            <person name="Eikmanns B.J."/>
            <person name="Gaigalat L."/>
            <person name="Goesmann A."/>
            <person name="Hartmann M."/>
            <person name="Huthmacher K."/>
            <person name="Kraemer R."/>
            <person name="Linke B."/>
            <person name="McHardy A.C."/>
            <person name="Meyer F."/>
            <person name="Moeckel B."/>
            <person name="Pfefferle W."/>
            <person name="Puehler A."/>
            <person name="Rey D.A."/>
            <person name="Rueckert C."/>
            <person name="Rupp O."/>
            <person name="Sahm H."/>
            <person name="Wendisch V.F."/>
            <person name="Wiegraebe I."/>
            <person name="Tauch A."/>
        </authorList>
    </citation>
    <scope>NUCLEOTIDE SEQUENCE [LARGE SCALE GENOMIC DNA]</scope>
    <source>
        <strain>ATCC 13032 / DSM 20300 / JCM 1318 / BCRC 11384 / CCUG 27702 / LMG 3730 / NBRC 12168 / NCIMB 10025 / NRRL B-2784 / 534</strain>
    </source>
</reference>
<name>KUP_CORGL</name>
<evidence type="ECO:0000255" key="1">
    <source>
        <dbReference type="HAMAP-Rule" id="MF_01522"/>
    </source>
</evidence>
<evidence type="ECO:0000305" key="2"/>
<proteinExistence type="inferred from homology"/>
<sequence>MKSARPKSVAPKSGQALLTLGALGVVFGDIGTSPLYSLHTAFSMQHNKVEVTQENVYGIISMVLWTITLIVTVKYVMLVTRADNQGQGGILALVALLKNRGHWGKFVAVAGMLGAALFYGDVVITPAISVLSATEGLTVISPSFERFILPVSLAVLIAIFAIQPLGTEKVGKAFGPIMLLWFVTLAGLGIPQIIGHPEILQSLSPHWALRLIVAEPFQAFVLLGAVVLTVTGAEALYADMGHFGARPIRVAWFCVVMPALILTYLGQGALVINQPEAVRNPMFYLAPEGLRIPLVILATIATVIASQAVISGAYSLTKQAVNLKLLPRMVIRHTSRKEEGQIYMPLVNGLLFVSVMVVVLVFRSSESLASAYGLAVTGTLVLVSVLYLIYVHTTWWKTALFIVLIGIPEVLLFASNTTKIHDGGWLPLLIAAVLIVVMRTWEWGSDRVNQERAELELPMDKFLEKLDQPHNIGLRKVAEVAVFPHGTSDTVPLSLVRCVKDLKLLYREIVIVRIVQEHVPHVPPEERAEMEVLHHAPIRVVRVDLHLGYFDEQNLPEHLHAIDPTWDNATYFLSALTLRSRLPGKIAGWRDRLYLSMERNQASRTESFKLQPSKTITVGTELHL</sequence>
<keyword id="KW-1003">Cell membrane</keyword>
<keyword id="KW-0406">Ion transport</keyword>
<keyword id="KW-0472">Membrane</keyword>
<keyword id="KW-0630">Potassium</keyword>
<keyword id="KW-0633">Potassium transport</keyword>
<keyword id="KW-1185">Reference proteome</keyword>
<keyword id="KW-0769">Symport</keyword>
<keyword id="KW-0812">Transmembrane</keyword>
<keyword id="KW-1133">Transmembrane helix</keyword>
<keyword id="KW-0813">Transport</keyword>
<comment type="function">
    <text evidence="1">Transport of potassium into the cell. Likely operates as a K(+):H(+) symporter.</text>
</comment>
<comment type="catalytic activity">
    <reaction evidence="1">
        <text>K(+)(in) + H(+)(in) = K(+)(out) + H(+)(out)</text>
        <dbReference type="Rhea" id="RHEA:28490"/>
        <dbReference type="ChEBI" id="CHEBI:15378"/>
        <dbReference type="ChEBI" id="CHEBI:29103"/>
    </reaction>
    <physiologicalReaction direction="right-to-left" evidence="1">
        <dbReference type="Rhea" id="RHEA:28492"/>
    </physiologicalReaction>
</comment>
<comment type="subcellular location">
    <subcellularLocation>
        <location evidence="1">Cell membrane</location>
        <topology evidence="1">Multi-pass membrane protein</topology>
    </subcellularLocation>
</comment>
<comment type="similarity">
    <text evidence="1">Belongs to the HAK/KUP transporter (TC 2.A.72) family.</text>
</comment>
<comment type="sequence caution" evidence="2">
    <conflict type="erroneous initiation">
        <sequence resource="EMBL-CDS" id="CAF19417"/>
    </conflict>
</comment>
<accession>Q8NSG3</accession>
<accession>Q6M767</accession>
<organism>
    <name type="scientific">Corynebacterium glutamicum (strain ATCC 13032 / DSM 20300 / JCM 1318 / BCRC 11384 / CCUG 27702 / LMG 3730 / NBRC 12168 / NCIMB 10025 / NRRL B-2784 / 534)</name>
    <dbReference type="NCBI Taxonomy" id="196627"/>
    <lineage>
        <taxon>Bacteria</taxon>
        <taxon>Bacillati</taxon>
        <taxon>Actinomycetota</taxon>
        <taxon>Actinomycetes</taxon>
        <taxon>Mycobacteriales</taxon>
        <taxon>Corynebacteriaceae</taxon>
        <taxon>Corynebacterium</taxon>
    </lineage>
</organism>
<gene>
    <name evidence="1" type="primary">kup</name>
    <name type="ordered locus">Cgl0712</name>
    <name type="ordered locus">cg0817</name>
</gene>
<feature type="chain" id="PRO_0000209010" description="Probable potassium transport system protein Kup">
    <location>
        <begin position="1"/>
        <end position="624"/>
    </location>
</feature>
<feature type="transmembrane region" description="Helical" evidence="1">
    <location>
        <begin position="16"/>
        <end position="36"/>
    </location>
</feature>
<feature type="transmembrane region" description="Helical" evidence="1">
    <location>
        <begin position="59"/>
        <end position="79"/>
    </location>
</feature>
<feature type="transmembrane region" description="Helical" evidence="1">
    <location>
        <begin position="106"/>
        <end position="126"/>
    </location>
</feature>
<feature type="transmembrane region" description="Helical" evidence="1">
    <location>
        <begin position="147"/>
        <end position="167"/>
    </location>
</feature>
<feature type="transmembrane region" description="Helical" evidence="1">
    <location>
        <begin position="174"/>
        <end position="194"/>
    </location>
</feature>
<feature type="transmembrane region" description="Helical" evidence="1">
    <location>
        <begin position="211"/>
        <end position="231"/>
    </location>
</feature>
<feature type="transmembrane region" description="Helical" evidence="1">
    <location>
        <begin position="252"/>
        <end position="272"/>
    </location>
</feature>
<feature type="transmembrane region" description="Helical" evidence="1">
    <location>
        <begin position="292"/>
        <end position="312"/>
    </location>
</feature>
<feature type="transmembrane region" description="Helical" evidence="1">
    <location>
        <begin position="342"/>
        <end position="362"/>
    </location>
</feature>
<feature type="transmembrane region" description="Helical" evidence="1">
    <location>
        <begin position="371"/>
        <end position="391"/>
    </location>
</feature>
<feature type="transmembrane region" description="Helical" evidence="1">
    <location>
        <begin position="394"/>
        <end position="414"/>
    </location>
</feature>
<feature type="transmembrane region" description="Helical" evidence="1">
    <location>
        <begin position="418"/>
        <end position="438"/>
    </location>
</feature>
<protein>
    <recommendedName>
        <fullName evidence="1">Probable potassium transport system protein Kup</fullName>
    </recommendedName>
</protein>